<dbReference type="EC" id="4.3.2.10" evidence="1"/>
<dbReference type="EMBL" id="CP000027">
    <property type="protein sequence ID" value="AAW39578.1"/>
    <property type="molecule type" value="Genomic_DNA"/>
</dbReference>
<dbReference type="RefSeq" id="WP_010936822.1">
    <property type="nucleotide sequence ID" value="NC_002936.3"/>
</dbReference>
<dbReference type="SMR" id="Q3Z7F5"/>
<dbReference type="FunCoup" id="Q3Z7F5">
    <property type="interactions" value="341"/>
</dbReference>
<dbReference type="STRING" id="243164.DET1129"/>
<dbReference type="GeneID" id="3229539"/>
<dbReference type="KEGG" id="det:DET1129"/>
<dbReference type="PATRIC" id="fig|243164.10.peg.1061"/>
<dbReference type="eggNOG" id="COG0107">
    <property type="taxonomic scope" value="Bacteria"/>
</dbReference>
<dbReference type="HOGENOM" id="CLU_048577_4_0_0"/>
<dbReference type="InParanoid" id="Q3Z7F5"/>
<dbReference type="UniPathway" id="UPA00031">
    <property type="reaction ID" value="UER00010"/>
</dbReference>
<dbReference type="Proteomes" id="UP000008289">
    <property type="component" value="Chromosome"/>
</dbReference>
<dbReference type="GO" id="GO:0005737">
    <property type="term" value="C:cytoplasm"/>
    <property type="evidence" value="ECO:0007669"/>
    <property type="project" value="UniProtKB-SubCell"/>
</dbReference>
<dbReference type="GO" id="GO:0000107">
    <property type="term" value="F:imidazoleglycerol-phosphate synthase activity"/>
    <property type="evidence" value="ECO:0007669"/>
    <property type="project" value="UniProtKB-UniRule"/>
</dbReference>
<dbReference type="GO" id="GO:0016829">
    <property type="term" value="F:lyase activity"/>
    <property type="evidence" value="ECO:0007669"/>
    <property type="project" value="UniProtKB-KW"/>
</dbReference>
<dbReference type="GO" id="GO:0000105">
    <property type="term" value="P:L-histidine biosynthetic process"/>
    <property type="evidence" value="ECO:0007669"/>
    <property type="project" value="UniProtKB-UniRule"/>
</dbReference>
<dbReference type="CDD" id="cd04731">
    <property type="entry name" value="HisF"/>
    <property type="match status" value="1"/>
</dbReference>
<dbReference type="FunFam" id="3.20.20.70:FF:000006">
    <property type="entry name" value="Imidazole glycerol phosphate synthase subunit HisF"/>
    <property type="match status" value="1"/>
</dbReference>
<dbReference type="Gene3D" id="3.20.20.70">
    <property type="entry name" value="Aldolase class I"/>
    <property type="match status" value="1"/>
</dbReference>
<dbReference type="HAMAP" id="MF_01013">
    <property type="entry name" value="HisF"/>
    <property type="match status" value="1"/>
</dbReference>
<dbReference type="InterPro" id="IPR013785">
    <property type="entry name" value="Aldolase_TIM"/>
</dbReference>
<dbReference type="InterPro" id="IPR006062">
    <property type="entry name" value="His_biosynth"/>
</dbReference>
<dbReference type="InterPro" id="IPR004651">
    <property type="entry name" value="HisF"/>
</dbReference>
<dbReference type="InterPro" id="IPR050064">
    <property type="entry name" value="IGPS_HisA/HisF"/>
</dbReference>
<dbReference type="InterPro" id="IPR011060">
    <property type="entry name" value="RibuloseP-bd_barrel"/>
</dbReference>
<dbReference type="NCBIfam" id="TIGR00735">
    <property type="entry name" value="hisF"/>
    <property type="match status" value="1"/>
</dbReference>
<dbReference type="PANTHER" id="PTHR21235:SF2">
    <property type="entry name" value="IMIDAZOLE GLYCEROL PHOSPHATE SYNTHASE HISHF"/>
    <property type="match status" value="1"/>
</dbReference>
<dbReference type="PANTHER" id="PTHR21235">
    <property type="entry name" value="IMIDAZOLE GLYCEROL PHOSPHATE SYNTHASE SUBUNIT HISF/H IGP SYNTHASE SUBUNIT HISF/H"/>
    <property type="match status" value="1"/>
</dbReference>
<dbReference type="Pfam" id="PF00977">
    <property type="entry name" value="His_biosynth"/>
    <property type="match status" value="1"/>
</dbReference>
<dbReference type="SUPFAM" id="SSF51366">
    <property type="entry name" value="Ribulose-phoshate binding barrel"/>
    <property type="match status" value="1"/>
</dbReference>
<gene>
    <name evidence="1" type="primary">hisF</name>
    <name type="ordered locus">DET1129</name>
</gene>
<accession>Q3Z7F5</accession>
<keyword id="KW-0028">Amino-acid biosynthesis</keyword>
<keyword id="KW-0963">Cytoplasm</keyword>
<keyword id="KW-0368">Histidine biosynthesis</keyword>
<keyword id="KW-0456">Lyase</keyword>
<name>HIS6_DEHM1</name>
<evidence type="ECO:0000255" key="1">
    <source>
        <dbReference type="HAMAP-Rule" id="MF_01013"/>
    </source>
</evidence>
<comment type="function">
    <text evidence="1">IGPS catalyzes the conversion of PRFAR and glutamine to IGP, AICAR and glutamate. The HisF subunit catalyzes the cyclization activity that produces IGP and AICAR from PRFAR using the ammonia provided by the HisH subunit.</text>
</comment>
<comment type="catalytic activity">
    <reaction evidence="1">
        <text>5-[(5-phospho-1-deoxy-D-ribulos-1-ylimino)methylamino]-1-(5-phospho-beta-D-ribosyl)imidazole-4-carboxamide + L-glutamine = D-erythro-1-(imidazol-4-yl)glycerol 3-phosphate + 5-amino-1-(5-phospho-beta-D-ribosyl)imidazole-4-carboxamide + L-glutamate + H(+)</text>
        <dbReference type="Rhea" id="RHEA:24793"/>
        <dbReference type="ChEBI" id="CHEBI:15378"/>
        <dbReference type="ChEBI" id="CHEBI:29985"/>
        <dbReference type="ChEBI" id="CHEBI:58278"/>
        <dbReference type="ChEBI" id="CHEBI:58359"/>
        <dbReference type="ChEBI" id="CHEBI:58475"/>
        <dbReference type="ChEBI" id="CHEBI:58525"/>
        <dbReference type="EC" id="4.3.2.10"/>
    </reaction>
</comment>
<comment type="pathway">
    <text evidence="1">Amino-acid biosynthesis; L-histidine biosynthesis; L-histidine from 5-phospho-alpha-D-ribose 1-diphosphate: step 5/9.</text>
</comment>
<comment type="subunit">
    <text evidence="1">Heterodimer of HisH and HisF.</text>
</comment>
<comment type="subcellular location">
    <subcellularLocation>
        <location evidence="1">Cytoplasm</location>
    </subcellularLocation>
</comment>
<comment type="similarity">
    <text evidence="1">Belongs to the HisA/HisF family.</text>
</comment>
<protein>
    <recommendedName>
        <fullName evidence="1">Imidazole glycerol phosphate synthase subunit HisF</fullName>
        <ecNumber evidence="1">4.3.2.10</ecNumber>
    </recommendedName>
    <alternativeName>
        <fullName evidence="1">IGP synthase cyclase subunit</fullName>
    </alternativeName>
    <alternativeName>
        <fullName evidence="1">IGP synthase subunit HisF</fullName>
    </alternativeName>
    <alternativeName>
        <fullName evidence="1">ImGP synthase subunit HisF</fullName>
        <shortName evidence="1">IGPS subunit HisF</shortName>
    </alternativeName>
</protein>
<feature type="chain" id="PRO_0000142151" description="Imidazole glycerol phosphate synthase subunit HisF">
    <location>
        <begin position="1"/>
        <end position="253"/>
    </location>
</feature>
<feature type="active site" evidence="1">
    <location>
        <position position="11"/>
    </location>
</feature>
<feature type="active site" evidence="1">
    <location>
        <position position="130"/>
    </location>
</feature>
<sequence>MLNKRVIPCLDVNNGRVVKGTSFVNLRDAGNPVELAARYYREGADELVFLDISATTEERKTMAEVVEQVSKEVFIPLCVGGGLRSIADMNTLLRAGADKVSINSAAVSDPDLISRGAEKFGRQCIVVAIDAKREGSGWQVYTHSGKKPAGLDAVEWAIKAEALGAGEILLTSIDADGKNTGYDNELNREISSRLNIPVIASGGAGSPEDLYNALDKGQADAVLAASIFHYGRYTIAEVKQYLKSKGLPVRLEN</sequence>
<organism>
    <name type="scientific">Dehalococcoides mccartyi (strain ATCC BAA-2266 / KCTC 15142 / 195)</name>
    <name type="common">Dehalococcoides ethenogenes (strain 195)</name>
    <dbReference type="NCBI Taxonomy" id="243164"/>
    <lineage>
        <taxon>Bacteria</taxon>
        <taxon>Bacillati</taxon>
        <taxon>Chloroflexota</taxon>
        <taxon>Dehalococcoidia</taxon>
        <taxon>Dehalococcoidales</taxon>
        <taxon>Dehalococcoidaceae</taxon>
        <taxon>Dehalococcoides</taxon>
    </lineage>
</organism>
<reference key="1">
    <citation type="journal article" date="2005" name="Science">
        <title>Genome sequence of the PCE-dechlorinating bacterium Dehalococcoides ethenogenes.</title>
        <authorList>
            <person name="Seshadri R."/>
            <person name="Adrian L."/>
            <person name="Fouts D.E."/>
            <person name="Eisen J.A."/>
            <person name="Phillippy A.M."/>
            <person name="Methe B.A."/>
            <person name="Ward N.L."/>
            <person name="Nelson W.C."/>
            <person name="DeBoy R.T."/>
            <person name="Khouri H.M."/>
            <person name="Kolonay J.F."/>
            <person name="Dodson R.J."/>
            <person name="Daugherty S.C."/>
            <person name="Brinkac L.M."/>
            <person name="Sullivan S.A."/>
            <person name="Madupu R."/>
            <person name="Nelson K.E."/>
            <person name="Kang K.H."/>
            <person name="Impraim M."/>
            <person name="Tran K."/>
            <person name="Robinson J.M."/>
            <person name="Forberger H.A."/>
            <person name="Fraser C.M."/>
            <person name="Zinder S.H."/>
            <person name="Heidelberg J.F."/>
        </authorList>
    </citation>
    <scope>NUCLEOTIDE SEQUENCE [LARGE SCALE GENOMIC DNA]</scope>
    <source>
        <strain>ATCC BAA-2266 / KCTC 15142 / 195</strain>
    </source>
</reference>
<proteinExistence type="inferred from homology"/>